<proteinExistence type="inferred from homology"/>
<protein>
    <recommendedName>
        <fullName evidence="1">UDP-N-acetylmuramoylalanine--D-glutamate ligase</fullName>
        <ecNumber evidence="1">6.3.2.9</ecNumber>
    </recommendedName>
    <alternativeName>
        <fullName evidence="1">D-glutamic acid-adding enzyme</fullName>
    </alternativeName>
    <alternativeName>
        <fullName evidence="1">UDP-N-acetylmuramoyl-L-alanyl-D-glutamate synthetase</fullName>
    </alternativeName>
</protein>
<accession>Q6FFC2</accession>
<keyword id="KW-0067">ATP-binding</keyword>
<keyword id="KW-0131">Cell cycle</keyword>
<keyword id="KW-0132">Cell division</keyword>
<keyword id="KW-0133">Cell shape</keyword>
<keyword id="KW-0961">Cell wall biogenesis/degradation</keyword>
<keyword id="KW-0963">Cytoplasm</keyword>
<keyword id="KW-0436">Ligase</keyword>
<keyword id="KW-0547">Nucleotide-binding</keyword>
<keyword id="KW-0573">Peptidoglycan synthesis</keyword>
<gene>
    <name evidence="1" type="primary">murD</name>
    <name type="ordered locus">ACIAD0270</name>
</gene>
<sequence>MLIQRGGLKVVAGLGISGVSAVNFLHEQGYRVAVTDSRETPPGHDQIPQDVQTSFGQLDTELLLQAEEIILSPGLAPQLPEIQQAIAQGIPVIGDIQVLRRATQVPIVAITGSNAKSTVTTLFGQMAKDAGKRVAVGGNLGRPGLDLLKDEPELLVLELSSFQLETTSHLNAEVAVILNMSEDHLDRHGDMLGYHQAKHRIFQGVKKVVYNRDDSLTRPLVPDSTPMQSFGLNAPDIKQYGVLREDDGTMWLARGRTRLIKSSELYIQGTHNIANALACLALGEAIGLPVESMLETLKQFKGLEHRCEYVKTVNDVRYYNDSKGTNVGATLAAIDGLGAAIEPKQGKVIVILGGQGKGQDFSLLRQSVEKYVKAAILIGEDAQQIEQALTETTQLVHASTLKDAVTQAQQYAQPEDVVLLSPACASFDMFKGYPDRGHQFVACVDALV</sequence>
<reference key="1">
    <citation type="journal article" date="2004" name="Nucleic Acids Res.">
        <title>Unique features revealed by the genome sequence of Acinetobacter sp. ADP1, a versatile and naturally transformation competent bacterium.</title>
        <authorList>
            <person name="Barbe V."/>
            <person name="Vallenet D."/>
            <person name="Fonknechten N."/>
            <person name="Kreimeyer A."/>
            <person name="Oztas S."/>
            <person name="Labarre L."/>
            <person name="Cruveiller S."/>
            <person name="Robert C."/>
            <person name="Duprat S."/>
            <person name="Wincker P."/>
            <person name="Ornston L.N."/>
            <person name="Weissenbach J."/>
            <person name="Marliere P."/>
            <person name="Cohen G.N."/>
            <person name="Medigue C."/>
        </authorList>
    </citation>
    <scope>NUCLEOTIDE SEQUENCE [LARGE SCALE GENOMIC DNA]</scope>
    <source>
        <strain>ATCC 33305 / BD413 / ADP1</strain>
    </source>
</reference>
<dbReference type="EC" id="6.3.2.9" evidence="1"/>
<dbReference type="EMBL" id="CR543861">
    <property type="protein sequence ID" value="CAG67235.1"/>
    <property type="status" value="ALT_INIT"/>
    <property type="molecule type" value="Genomic_DNA"/>
</dbReference>
<dbReference type="RefSeq" id="WP_004920697.1">
    <property type="nucleotide sequence ID" value="NC_005966.1"/>
</dbReference>
<dbReference type="SMR" id="Q6FFC2"/>
<dbReference type="STRING" id="202950.GCA_001485005_00544"/>
<dbReference type="GeneID" id="45232784"/>
<dbReference type="KEGG" id="aci:ACIAD0270"/>
<dbReference type="eggNOG" id="COG0771">
    <property type="taxonomic scope" value="Bacteria"/>
</dbReference>
<dbReference type="HOGENOM" id="CLU_032540_1_0_6"/>
<dbReference type="OrthoDB" id="9809796at2"/>
<dbReference type="BioCyc" id="ASP62977:ACIAD_RS01275-MONOMER"/>
<dbReference type="UniPathway" id="UPA00219"/>
<dbReference type="Proteomes" id="UP000000430">
    <property type="component" value="Chromosome"/>
</dbReference>
<dbReference type="GO" id="GO:0005737">
    <property type="term" value="C:cytoplasm"/>
    <property type="evidence" value="ECO:0007669"/>
    <property type="project" value="UniProtKB-SubCell"/>
</dbReference>
<dbReference type="GO" id="GO:0005524">
    <property type="term" value="F:ATP binding"/>
    <property type="evidence" value="ECO:0007669"/>
    <property type="project" value="UniProtKB-UniRule"/>
</dbReference>
<dbReference type="GO" id="GO:0008764">
    <property type="term" value="F:UDP-N-acetylmuramoylalanine-D-glutamate ligase activity"/>
    <property type="evidence" value="ECO:0007669"/>
    <property type="project" value="UniProtKB-UniRule"/>
</dbReference>
<dbReference type="GO" id="GO:0051301">
    <property type="term" value="P:cell division"/>
    <property type="evidence" value="ECO:0007669"/>
    <property type="project" value="UniProtKB-KW"/>
</dbReference>
<dbReference type="GO" id="GO:0071555">
    <property type="term" value="P:cell wall organization"/>
    <property type="evidence" value="ECO:0007669"/>
    <property type="project" value="UniProtKB-KW"/>
</dbReference>
<dbReference type="GO" id="GO:0009252">
    <property type="term" value="P:peptidoglycan biosynthetic process"/>
    <property type="evidence" value="ECO:0007669"/>
    <property type="project" value="UniProtKB-UniRule"/>
</dbReference>
<dbReference type="GO" id="GO:0008360">
    <property type="term" value="P:regulation of cell shape"/>
    <property type="evidence" value="ECO:0007669"/>
    <property type="project" value="UniProtKB-KW"/>
</dbReference>
<dbReference type="Gene3D" id="3.90.190.20">
    <property type="entry name" value="Mur ligase, C-terminal domain"/>
    <property type="match status" value="1"/>
</dbReference>
<dbReference type="Gene3D" id="3.40.1190.10">
    <property type="entry name" value="Mur-like, catalytic domain"/>
    <property type="match status" value="1"/>
</dbReference>
<dbReference type="Gene3D" id="3.40.50.720">
    <property type="entry name" value="NAD(P)-binding Rossmann-like Domain"/>
    <property type="match status" value="1"/>
</dbReference>
<dbReference type="HAMAP" id="MF_00639">
    <property type="entry name" value="MurD"/>
    <property type="match status" value="1"/>
</dbReference>
<dbReference type="InterPro" id="IPR036565">
    <property type="entry name" value="Mur-like_cat_sf"/>
</dbReference>
<dbReference type="InterPro" id="IPR004101">
    <property type="entry name" value="Mur_ligase_C"/>
</dbReference>
<dbReference type="InterPro" id="IPR036615">
    <property type="entry name" value="Mur_ligase_C_dom_sf"/>
</dbReference>
<dbReference type="InterPro" id="IPR013221">
    <property type="entry name" value="Mur_ligase_cen"/>
</dbReference>
<dbReference type="InterPro" id="IPR005762">
    <property type="entry name" value="MurD"/>
</dbReference>
<dbReference type="NCBIfam" id="TIGR01087">
    <property type="entry name" value="murD"/>
    <property type="match status" value="1"/>
</dbReference>
<dbReference type="PANTHER" id="PTHR43692">
    <property type="entry name" value="UDP-N-ACETYLMURAMOYLALANINE--D-GLUTAMATE LIGASE"/>
    <property type="match status" value="1"/>
</dbReference>
<dbReference type="PANTHER" id="PTHR43692:SF1">
    <property type="entry name" value="UDP-N-ACETYLMURAMOYLALANINE--D-GLUTAMATE LIGASE"/>
    <property type="match status" value="1"/>
</dbReference>
<dbReference type="Pfam" id="PF02875">
    <property type="entry name" value="Mur_ligase_C"/>
    <property type="match status" value="1"/>
</dbReference>
<dbReference type="Pfam" id="PF08245">
    <property type="entry name" value="Mur_ligase_M"/>
    <property type="match status" value="1"/>
</dbReference>
<dbReference type="Pfam" id="PF21799">
    <property type="entry name" value="MurD-like_N"/>
    <property type="match status" value="1"/>
</dbReference>
<dbReference type="SUPFAM" id="SSF51984">
    <property type="entry name" value="MurCD N-terminal domain"/>
    <property type="match status" value="1"/>
</dbReference>
<dbReference type="SUPFAM" id="SSF53623">
    <property type="entry name" value="MurD-like peptide ligases, catalytic domain"/>
    <property type="match status" value="1"/>
</dbReference>
<dbReference type="SUPFAM" id="SSF53244">
    <property type="entry name" value="MurD-like peptide ligases, peptide-binding domain"/>
    <property type="match status" value="1"/>
</dbReference>
<name>MURD_ACIAD</name>
<organism>
    <name type="scientific">Acinetobacter baylyi (strain ATCC 33305 / BD413 / ADP1)</name>
    <dbReference type="NCBI Taxonomy" id="62977"/>
    <lineage>
        <taxon>Bacteria</taxon>
        <taxon>Pseudomonadati</taxon>
        <taxon>Pseudomonadota</taxon>
        <taxon>Gammaproteobacteria</taxon>
        <taxon>Moraxellales</taxon>
        <taxon>Moraxellaceae</taxon>
        <taxon>Acinetobacter</taxon>
    </lineage>
</organism>
<comment type="function">
    <text evidence="1">Cell wall formation. Catalyzes the addition of glutamate to the nucleotide precursor UDP-N-acetylmuramoyl-L-alanine (UMA).</text>
</comment>
<comment type="catalytic activity">
    <reaction evidence="1">
        <text>UDP-N-acetyl-alpha-D-muramoyl-L-alanine + D-glutamate + ATP = UDP-N-acetyl-alpha-D-muramoyl-L-alanyl-D-glutamate + ADP + phosphate + H(+)</text>
        <dbReference type="Rhea" id="RHEA:16429"/>
        <dbReference type="ChEBI" id="CHEBI:15378"/>
        <dbReference type="ChEBI" id="CHEBI:29986"/>
        <dbReference type="ChEBI" id="CHEBI:30616"/>
        <dbReference type="ChEBI" id="CHEBI:43474"/>
        <dbReference type="ChEBI" id="CHEBI:83898"/>
        <dbReference type="ChEBI" id="CHEBI:83900"/>
        <dbReference type="ChEBI" id="CHEBI:456216"/>
        <dbReference type="EC" id="6.3.2.9"/>
    </reaction>
</comment>
<comment type="pathway">
    <text evidence="1">Cell wall biogenesis; peptidoglycan biosynthesis.</text>
</comment>
<comment type="subcellular location">
    <subcellularLocation>
        <location evidence="1">Cytoplasm</location>
    </subcellularLocation>
</comment>
<comment type="similarity">
    <text evidence="1">Belongs to the MurCDEF family.</text>
</comment>
<comment type="sequence caution" evidence="2">
    <conflict type="erroneous initiation">
        <sequence resource="EMBL-CDS" id="CAG67235"/>
    </conflict>
</comment>
<feature type="chain" id="PRO_0000108953" description="UDP-N-acetylmuramoylalanine--D-glutamate ligase">
    <location>
        <begin position="1"/>
        <end position="448"/>
    </location>
</feature>
<feature type="binding site" evidence="1">
    <location>
        <begin position="112"/>
        <end position="118"/>
    </location>
    <ligand>
        <name>ATP</name>
        <dbReference type="ChEBI" id="CHEBI:30616"/>
    </ligand>
</feature>
<evidence type="ECO:0000255" key="1">
    <source>
        <dbReference type="HAMAP-Rule" id="MF_00639"/>
    </source>
</evidence>
<evidence type="ECO:0000305" key="2"/>